<feature type="chain" id="PRO_1000074401" description="Cobyric acid synthase">
    <location>
        <begin position="1"/>
        <end position="491"/>
    </location>
</feature>
<feature type="domain" description="GATase cobBQ-type" evidence="1">
    <location>
        <begin position="250"/>
        <end position="439"/>
    </location>
</feature>
<feature type="active site" description="Nucleophile" evidence="1">
    <location>
        <position position="331"/>
    </location>
</feature>
<feature type="active site" evidence="1">
    <location>
        <position position="431"/>
    </location>
</feature>
<sequence length="491" mass="53963">MKAIMAVGTTSHAGKSFLTAALCRLFNRKGWQVTPFKGQNMALNAYVTAGGGEMGHAQAVQAWAAGTIPRVEMNPILLKPQGNMTSQVIIKGKAVGVTTAVDYYQNYFEQGWQAIKESLAKLSAEFDLVVCEGAGSPAEINLKHRDLTNMRVAKYLDAATILVVDIDRGGAFAHVVGTLELLEPEERALIKGIVINKFRGQKSLLDSGITWLEDYTKIPVLGVLPYSDIFLSAEDSLSLLDRPAQKPKAELNIIVIRLPHIANFTDFDPLCGEATVNVRYLELQESLGDPDGVIIPGSKTTVADLIALNQSGMANQLQAYHQRGGIIFGICGGLQMLGRLILDTDHREGPESEAAGLNLLPLKTVITAEKITRQRQVLSNYPQGGLPVMGYEIHQGISQWESESGYQKMFEEDASLGIVNDSLSIWGCYLHGIFDNGSWRRTWLNHLRQRRGLLSLPTGIANYCEQREITLDNMANLLEEHLNLQPIFAHL</sequence>
<dbReference type="EMBL" id="AP009552">
    <property type="protein sequence ID" value="BAG05534.1"/>
    <property type="molecule type" value="Genomic_DNA"/>
</dbReference>
<dbReference type="RefSeq" id="WP_012267957.1">
    <property type="nucleotide sequence ID" value="NC_010296.1"/>
</dbReference>
<dbReference type="STRING" id="449447.MAE_57120"/>
<dbReference type="PaxDb" id="449447-MAE_57120"/>
<dbReference type="EnsemblBacteria" id="BAG05534">
    <property type="protein sequence ID" value="BAG05534"/>
    <property type="gene ID" value="MAE_57120"/>
</dbReference>
<dbReference type="KEGG" id="mar:MAE_57120"/>
<dbReference type="PATRIC" id="fig|449447.4.peg.5221"/>
<dbReference type="eggNOG" id="COG1492">
    <property type="taxonomic scope" value="Bacteria"/>
</dbReference>
<dbReference type="HOGENOM" id="CLU_019250_2_2_3"/>
<dbReference type="BioCyc" id="MAER449447:MAE_RS24890-MONOMER"/>
<dbReference type="UniPathway" id="UPA00148"/>
<dbReference type="Proteomes" id="UP000001510">
    <property type="component" value="Chromosome"/>
</dbReference>
<dbReference type="GO" id="GO:0015420">
    <property type="term" value="F:ABC-type vitamin B12 transporter activity"/>
    <property type="evidence" value="ECO:0007669"/>
    <property type="project" value="UniProtKB-UniRule"/>
</dbReference>
<dbReference type="GO" id="GO:0003824">
    <property type="term" value="F:catalytic activity"/>
    <property type="evidence" value="ECO:0007669"/>
    <property type="project" value="InterPro"/>
</dbReference>
<dbReference type="GO" id="GO:0009236">
    <property type="term" value="P:cobalamin biosynthetic process"/>
    <property type="evidence" value="ECO:0007669"/>
    <property type="project" value="UniProtKB-UniRule"/>
</dbReference>
<dbReference type="CDD" id="cd05389">
    <property type="entry name" value="CobQ_N"/>
    <property type="match status" value="1"/>
</dbReference>
<dbReference type="CDD" id="cd01750">
    <property type="entry name" value="GATase1_CobQ"/>
    <property type="match status" value="1"/>
</dbReference>
<dbReference type="Gene3D" id="3.40.50.880">
    <property type="match status" value="1"/>
</dbReference>
<dbReference type="Gene3D" id="3.40.50.300">
    <property type="entry name" value="P-loop containing nucleotide triphosphate hydrolases"/>
    <property type="match status" value="1"/>
</dbReference>
<dbReference type="HAMAP" id="MF_00028">
    <property type="entry name" value="CobQ"/>
    <property type="match status" value="1"/>
</dbReference>
<dbReference type="InterPro" id="IPR029062">
    <property type="entry name" value="Class_I_gatase-like"/>
</dbReference>
<dbReference type="InterPro" id="IPR002586">
    <property type="entry name" value="CobQ/CobB/MinD/ParA_Nub-bd_dom"/>
</dbReference>
<dbReference type="InterPro" id="IPR033949">
    <property type="entry name" value="CobQ_GATase1"/>
</dbReference>
<dbReference type="InterPro" id="IPR047045">
    <property type="entry name" value="CobQ_N"/>
</dbReference>
<dbReference type="InterPro" id="IPR004459">
    <property type="entry name" value="CobQ_synth"/>
</dbReference>
<dbReference type="InterPro" id="IPR011698">
    <property type="entry name" value="GATase_3"/>
</dbReference>
<dbReference type="InterPro" id="IPR027417">
    <property type="entry name" value="P-loop_NTPase"/>
</dbReference>
<dbReference type="NCBIfam" id="TIGR00313">
    <property type="entry name" value="cobQ"/>
    <property type="match status" value="1"/>
</dbReference>
<dbReference type="NCBIfam" id="NF001989">
    <property type="entry name" value="PRK00784.1"/>
    <property type="match status" value="1"/>
</dbReference>
<dbReference type="PANTHER" id="PTHR21343:SF1">
    <property type="entry name" value="COBYRIC ACID SYNTHASE"/>
    <property type="match status" value="1"/>
</dbReference>
<dbReference type="PANTHER" id="PTHR21343">
    <property type="entry name" value="DETHIOBIOTIN SYNTHETASE"/>
    <property type="match status" value="1"/>
</dbReference>
<dbReference type="Pfam" id="PF01656">
    <property type="entry name" value="CbiA"/>
    <property type="match status" value="1"/>
</dbReference>
<dbReference type="Pfam" id="PF07685">
    <property type="entry name" value="GATase_3"/>
    <property type="match status" value="1"/>
</dbReference>
<dbReference type="SUPFAM" id="SSF52317">
    <property type="entry name" value="Class I glutamine amidotransferase-like"/>
    <property type="match status" value="1"/>
</dbReference>
<dbReference type="SUPFAM" id="SSF52540">
    <property type="entry name" value="P-loop containing nucleoside triphosphate hydrolases"/>
    <property type="match status" value="1"/>
</dbReference>
<dbReference type="PROSITE" id="PS51274">
    <property type="entry name" value="GATASE_COBBQ"/>
    <property type="match status" value="1"/>
</dbReference>
<gene>
    <name evidence="1" type="primary">cobQ</name>
    <name type="ordered locus">MAE_57120</name>
</gene>
<evidence type="ECO:0000255" key="1">
    <source>
        <dbReference type="HAMAP-Rule" id="MF_00028"/>
    </source>
</evidence>
<reference key="1">
    <citation type="journal article" date="2007" name="DNA Res.">
        <title>Complete genomic structure of the bloom-forming toxic cyanobacterium Microcystis aeruginosa NIES-843.</title>
        <authorList>
            <person name="Kaneko T."/>
            <person name="Nakajima N."/>
            <person name="Okamoto S."/>
            <person name="Suzuki I."/>
            <person name="Tanabe Y."/>
            <person name="Tamaoki M."/>
            <person name="Nakamura Y."/>
            <person name="Kasai F."/>
            <person name="Watanabe A."/>
            <person name="Kawashima K."/>
            <person name="Kishida Y."/>
            <person name="Ono A."/>
            <person name="Shimizu Y."/>
            <person name="Takahashi C."/>
            <person name="Minami C."/>
            <person name="Fujishiro T."/>
            <person name="Kohara M."/>
            <person name="Katoh M."/>
            <person name="Nakazaki N."/>
            <person name="Nakayama S."/>
            <person name="Yamada M."/>
            <person name="Tabata S."/>
            <person name="Watanabe M.M."/>
        </authorList>
    </citation>
    <scope>NUCLEOTIDE SEQUENCE [LARGE SCALE GENOMIC DNA]</scope>
    <source>
        <strain>NIES-843 / IAM M-247</strain>
    </source>
</reference>
<keyword id="KW-0169">Cobalamin biosynthesis</keyword>
<keyword id="KW-0315">Glutamine amidotransferase</keyword>
<proteinExistence type="inferred from homology"/>
<name>COBQ_MICAN</name>
<accession>B0JHX2</accession>
<organism>
    <name type="scientific">Microcystis aeruginosa (strain NIES-843 / IAM M-2473)</name>
    <dbReference type="NCBI Taxonomy" id="449447"/>
    <lineage>
        <taxon>Bacteria</taxon>
        <taxon>Bacillati</taxon>
        <taxon>Cyanobacteriota</taxon>
        <taxon>Cyanophyceae</taxon>
        <taxon>Oscillatoriophycideae</taxon>
        <taxon>Chroococcales</taxon>
        <taxon>Microcystaceae</taxon>
        <taxon>Microcystis</taxon>
    </lineage>
</organism>
<comment type="function">
    <text evidence="1">Catalyzes amidations at positions B, D, E, and G on adenosylcobyrinic A,C-diamide. NH(2) groups are provided by glutamine, and one molecule of ATP is hydrogenolyzed for each amidation.</text>
</comment>
<comment type="pathway">
    <text evidence="1">Cofactor biosynthesis; adenosylcobalamin biosynthesis.</text>
</comment>
<comment type="similarity">
    <text evidence="1">Belongs to the CobB/CobQ family. CobQ subfamily.</text>
</comment>
<protein>
    <recommendedName>
        <fullName evidence="1">Cobyric acid synthase</fullName>
    </recommendedName>
</protein>